<feature type="chain" id="PRO_0000271491" description="Acid sugar phosphatase">
    <location>
        <begin position="1"/>
        <end position="263"/>
    </location>
</feature>
<dbReference type="EC" id="3.1.3.-" evidence="1"/>
<dbReference type="EMBL" id="AP006716">
    <property type="protein sequence ID" value="BAE05333.1"/>
    <property type="molecule type" value="Genomic_DNA"/>
</dbReference>
<dbReference type="RefSeq" id="WP_011276290.1">
    <property type="nucleotide sequence ID" value="NC_007168.1"/>
</dbReference>
<dbReference type="SMR" id="Q4L4U2"/>
<dbReference type="KEGG" id="sha:SH2024"/>
<dbReference type="eggNOG" id="COG0647">
    <property type="taxonomic scope" value="Bacteria"/>
</dbReference>
<dbReference type="HOGENOM" id="CLU_043473_1_1_9"/>
<dbReference type="OrthoDB" id="9810449at2"/>
<dbReference type="Proteomes" id="UP000000543">
    <property type="component" value="Chromosome"/>
</dbReference>
<dbReference type="GO" id="GO:0005737">
    <property type="term" value="C:cytoplasm"/>
    <property type="evidence" value="ECO:0007669"/>
    <property type="project" value="TreeGrafter"/>
</dbReference>
<dbReference type="GO" id="GO:0046872">
    <property type="term" value="F:metal ion binding"/>
    <property type="evidence" value="ECO:0007669"/>
    <property type="project" value="UniProtKB-KW"/>
</dbReference>
<dbReference type="GO" id="GO:0016791">
    <property type="term" value="F:phosphatase activity"/>
    <property type="evidence" value="ECO:0007669"/>
    <property type="project" value="TreeGrafter"/>
</dbReference>
<dbReference type="CDD" id="cd07530">
    <property type="entry name" value="HAD_Pase_UmpH-like"/>
    <property type="match status" value="1"/>
</dbReference>
<dbReference type="FunFam" id="3.40.50.1000:FF:000053">
    <property type="entry name" value="TIGR01457 family HAD hydrolase"/>
    <property type="match status" value="1"/>
</dbReference>
<dbReference type="Gene3D" id="3.40.50.1000">
    <property type="entry name" value="HAD superfamily/HAD-like"/>
    <property type="match status" value="2"/>
</dbReference>
<dbReference type="InterPro" id="IPR036412">
    <property type="entry name" value="HAD-like_sf"/>
</dbReference>
<dbReference type="InterPro" id="IPR006357">
    <property type="entry name" value="HAD-SF_hydro_IIA"/>
</dbReference>
<dbReference type="InterPro" id="IPR006354">
    <property type="entry name" value="HAD-SF_hydro_IIA_hyp1"/>
</dbReference>
<dbReference type="InterPro" id="IPR023214">
    <property type="entry name" value="HAD_sf"/>
</dbReference>
<dbReference type="NCBIfam" id="TIGR01460">
    <property type="entry name" value="HAD-SF-IIA"/>
    <property type="match status" value="1"/>
</dbReference>
<dbReference type="NCBIfam" id="TIGR01457">
    <property type="entry name" value="HAD-SF-IIA-hyp2"/>
    <property type="match status" value="1"/>
</dbReference>
<dbReference type="PANTHER" id="PTHR19288">
    <property type="entry name" value="4-NITROPHENYLPHOSPHATASE-RELATED"/>
    <property type="match status" value="1"/>
</dbReference>
<dbReference type="PANTHER" id="PTHR19288:SF46">
    <property type="entry name" value="HALOACID DEHALOGENASE-LIKE HYDROLASE DOMAIN-CONTAINING PROTEIN 2"/>
    <property type="match status" value="1"/>
</dbReference>
<dbReference type="Pfam" id="PF13344">
    <property type="entry name" value="Hydrolase_6"/>
    <property type="match status" value="1"/>
</dbReference>
<dbReference type="Pfam" id="PF13242">
    <property type="entry name" value="Hydrolase_like"/>
    <property type="match status" value="1"/>
</dbReference>
<dbReference type="PIRSF" id="PIRSF000915">
    <property type="entry name" value="PGP-type_phosphatase"/>
    <property type="match status" value="1"/>
</dbReference>
<dbReference type="SFLD" id="SFLDG01139">
    <property type="entry name" value="C2.A:_Pyridoxal_Phosphate_Phos"/>
    <property type="match status" value="1"/>
</dbReference>
<dbReference type="SFLD" id="SFLDS00003">
    <property type="entry name" value="Haloacid_Dehalogenase"/>
    <property type="match status" value="1"/>
</dbReference>
<dbReference type="SUPFAM" id="SSF56784">
    <property type="entry name" value="HAD-like"/>
    <property type="match status" value="1"/>
</dbReference>
<gene>
    <name type="primary">nagD</name>
    <name type="ordered locus">SH2024</name>
</gene>
<proteinExistence type="inferred from homology"/>
<comment type="function">
    <text evidence="1">Catalyzes the dephosphorylation of 2-6 carbon acid sugars in vitro.</text>
</comment>
<comment type="cofactor">
    <cofactor evidence="1">
        <name>Mg(2+)</name>
        <dbReference type="ChEBI" id="CHEBI:18420"/>
    </cofactor>
</comment>
<comment type="similarity">
    <text evidence="2">Belongs to the HAD-like hydrolase superfamily. NagD family.</text>
</comment>
<protein>
    <recommendedName>
        <fullName evidence="1">Acid sugar phosphatase</fullName>
        <ecNumber evidence="1">3.1.3.-</ecNumber>
    </recommendedName>
</protein>
<organism>
    <name type="scientific">Staphylococcus haemolyticus (strain JCSC1435)</name>
    <dbReference type="NCBI Taxonomy" id="279808"/>
    <lineage>
        <taxon>Bacteria</taxon>
        <taxon>Bacillati</taxon>
        <taxon>Bacillota</taxon>
        <taxon>Bacilli</taxon>
        <taxon>Bacillales</taxon>
        <taxon>Staphylococcaceae</taxon>
        <taxon>Staphylococcus</taxon>
    </lineage>
</organism>
<name>NAGD_STAHJ</name>
<evidence type="ECO:0000250" key="1">
    <source>
        <dbReference type="UniProtKB" id="Q99VE8"/>
    </source>
</evidence>
<evidence type="ECO:0000305" key="2"/>
<accession>Q4L4U2</accession>
<keyword id="KW-0378">Hydrolase</keyword>
<keyword id="KW-0460">Magnesium</keyword>
<keyword id="KW-0479">Metal-binding</keyword>
<sequence>MKNYKGYLIDLDGTMYLGTDEIDGAAQFIDYLNNHQIPHLYVTNNSTKTPEEVTQKLKEMNIDAKPEEVVTSALATANYISDEKSDATVYMLGGNGLRTALTEAGLTVKDDENVDYVAIGLDENVTYEKLAVATLAVRKGARFISTNPDVSIPKERGFLPGNGAITSVVSVSTGQAPQFIGKPEPVIMDIALDILKLDKSDVAMVGDLYDTDIMSGINVGVDTIHVQTGVTTYEELKEKDQQPTYSFKDLNVAISELEKNAQK</sequence>
<reference key="1">
    <citation type="journal article" date="2005" name="J. Bacteriol.">
        <title>Whole-genome sequencing of Staphylococcus haemolyticus uncovers the extreme plasticity of its genome and the evolution of human-colonizing staphylococcal species.</title>
        <authorList>
            <person name="Takeuchi F."/>
            <person name="Watanabe S."/>
            <person name="Baba T."/>
            <person name="Yuzawa H."/>
            <person name="Ito T."/>
            <person name="Morimoto Y."/>
            <person name="Kuroda M."/>
            <person name="Cui L."/>
            <person name="Takahashi M."/>
            <person name="Ankai A."/>
            <person name="Baba S."/>
            <person name="Fukui S."/>
            <person name="Lee J.C."/>
            <person name="Hiramatsu K."/>
        </authorList>
    </citation>
    <scope>NUCLEOTIDE SEQUENCE [LARGE SCALE GENOMIC DNA]</scope>
    <source>
        <strain>JCSC1435</strain>
    </source>
</reference>